<evidence type="ECO:0000250" key="1"/>
<evidence type="ECO:0000305" key="2"/>
<proteinExistence type="evidence at transcript level"/>
<organism>
    <name type="scientific">Oryza sativa subsp. japonica</name>
    <name type="common">Rice</name>
    <dbReference type="NCBI Taxonomy" id="39947"/>
    <lineage>
        <taxon>Eukaryota</taxon>
        <taxon>Viridiplantae</taxon>
        <taxon>Streptophyta</taxon>
        <taxon>Embryophyta</taxon>
        <taxon>Tracheophyta</taxon>
        <taxon>Spermatophyta</taxon>
        <taxon>Magnoliopsida</taxon>
        <taxon>Liliopsida</taxon>
        <taxon>Poales</taxon>
        <taxon>Poaceae</taxon>
        <taxon>BOP clade</taxon>
        <taxon>Oryzoideae</taxon>
        <taxon>Oryzeae</taxon>
        <taxon>Oryzinae</taxon>
        <taxon>Oryza</taxon>
        <taxon>Oryza sativa</taxon>
    </lineage>
</organism>
<comment type="function">
    <text evidence="1">Hydrolyzes ADP-ribose, IDP-ribose, CDP-glycerol, CDP-choline and CDP-ethanolamine, but not other non-reducing ADP-sugars or CDP-glucose.</text>
</comment>
<comment type="catalytic activity">
    <reaction>
        <text>CDP-choline + H2O = phosphocholine + CMP + 2 H(+)</text>
        <dbReference type="Rhea" id="RHEA:32487"/>
        <dbReference type="ChEBI" id="CHEBI:15377"/>
        <dbReference type="ChEBI" id="CHEBI:15378"/>
        <dbReference type="ChEBI" id="CHEBI:58779"/>
        <dbReference type="ChEBI" id="CHEBI:60377"/>
        <dbReference type="ChEBI" id="CHEBI:295975"/>
        <dbReference type="EC" id="3.6.1.53"/>
    </reaction>
</comment>
<comment type="catalytic activity">
    <reaction>
        <text>ADP-D-ribose + H2O = D-ribose 5-phosphate + AMP + 2 H(+)</text>
        <dbReference type="Rhea" id="RHEA:10412"/>
        <dbReference type="ChEBI" id="CHEBI:15377"/>
        <dbReference type="ChEBI" id="CHEBI:15378"/>
        <dbReference type="ChEBI" id="CHEBI:57967"/>
        <dbReference type="ChEBI" id="CHEBI:78346"/>
        <dbReference type="ChEBI" id="CHEBI:456215"/>
        <dbReference type="EC" id="3.6.1.13"/>
    </reaction>
</comment>
<comment type="catalytic activity">
    <reaction>
        <text>ADP-D-ribose + H2O = D-ribose 5-phosphate + AMP + 2 H(+)</text>
        <dbReference type="Rhea" id="RHEA:10412"/>
        <dbReference type="ChEBI" id="CHEBI:15377"/>
        <dbReference type="ChEBI" id="CHEBI:15378"/>
        <dbReference type="ChEBI" id="CHEBI:57967"/>
        <dbReference type="ChEBI" id="CHEBI:78346"/>
        <dbReference type="ChEBI" id="CHEBI:456215"/>
        <dbReference type="EC" id="3.6.1.53"/>
    </reaction>
</comment>
<comment type="catalytic activity">
    <reaction>
        <text>CDP-glycerol + H2O = sn-glycerol 3-phosphate + CMP + 2 H(+)</text>
        <dbReference type="Rhea" id="RHEA:21692"/>
        <dbReference type="ChEBI" id="CHEBI:15377"/>
        <dbReference type="ChEBI" id="CHEBI:15378"/>
        <dbReference type="ChEBI" id="CHEBI:57597"/>
        <dbReference type="ChEBI" id="CHEBI:58311"/>
        <dbReference type="ChEBI" id="CHEBI:60377"/>
        <dbReference type="EC" id="3.6.1.16"/>
    </reaction>
</comment>
<comment type="cofactor">
    <cofactor evidence="1">
        <name>Mg(2+)</name>
        <dbReference type="ChEBI" id="CHEBI:18420"/>
    </cofactor>
</comment>
<comment type="subunit">
    <text evidence="1">Monomer.</text>
</comment>
<comment type="similarity">
    <text evidence="2">Belongs to the ADPRibase-Mn family.</text>
</comment>
<feature type="chain" id="PRO_0000417566" description="Manganese-dependent ADP-ribose/CDP-alcohol diphosphatase">
    <location>
        <begin position="1"/>
        <end position="321"/>
    </location>
</feature>
<feature type="binding site" evidence="1">
    <location>
        <position position="25"/>
    </location>
    <ligand>
        <name>Zn(2+)</name>
        <dbReference type="ChEBI" id="CHEBI:29105"/>
        <label>1</label>
    </ligand>
</feature>
<feature type="binding site" evidence="1">
    <location>
        <position position="27"/>
    </location>
    <ligand>
        <name>Zn(2+)</name>
        <dbReference type="ChEBI" id="CHEBI:29105"/>
        <label>1</label>
    </ligand>
</feature>
<feature type="binding site" evidence="1">
    <location>
        <position position="72"/>
    </location>
    <ligand>
        <name>Zn(2+)</name>
        <dbReference type="ChEBI" id="CHEBI:29105"/>
        <label>1</label>
    </ligand>
</feature>
<feature type="binding site" evidence="1">
    <location>
        <position position="72"/>
    </location>
    <ligand>
        <name>Zn(2+)</name>
        <dbReference type="ChEBI" id="CHEBI:29105"/>
        <label>2</label>
    </ligand>
</feature>
<feature type="binding site" evidence="1">
    <location>
        <position position="107"/>
    </location>
    <ligand>
        <name>Zn(2+)</name>
        <dbReference type="ChEBI" id="CHEBI:29105"/>
        <label>2</label>
    </ligand>
</feature>
<feature type="binding site" evidence="1">
    <location>
        <position position="226"/>
    </location>
    <ligand>
        <name>Zn(2+)</name>
        <dbReference type="ChEBI" id="CHEBI:29105"/>
        <label>2</label>
    </ligand>
</feature>
<feature type="binding site" evidence="1">
    <location>
        <position position="263"/>
    </location>
    <ligand>
        <name>Zn(2+)</name>
        <dbReference type="ChEBI" id="CHEBI:29105"/>
        <label>2</label>
    </ligand>
</feature>
<feature type="binding site" evidence="1">
    <location>
        <position position="265"/>
    </location>
    <ligand>
        <name>Zn(2+)</name>
        <dbReference type="ChEBI" id="CHEBI:29105"/>
        <label>1</label>
    </ligand>
</feature>
<reference key="1">
    <citation type="journal article" date="2005" name="Nature">
        <title>The map-based sequence of the rice genome.</title>
        <authorList>
            <consortium name="International rice genome sequencing project (IRGSP)"/>
        </authorList>
    </citation>
    <scope>NUCLEOTIDE SEQUENCE [LARGE SCALE GENOMIC DNA]</scope>
    <source>
        <strain>cv. Nipponbare</strain>
    </source>
</reference>
<reference key="2">
    <citation type="journal article" date="2008" name="Nucleic Acids Res.">
        <title>The rice annotation project database (RAP-DB): 2008 update.</title>
        <authorList>
            <consortium name="The rice annotation project (RAP)"/>
        </authorList>
    </citation>
    <scope>GENOME REANNOTATION</scope>
    <source>
        <strain>cv. Nipponbare</strain>
    </source>
</reference>
<reference key="3">
    <citation type="journal article" date="2013" name="Rice">
        <title>Improvement of the Oryza sativa Nipponbare reference genome using next generation sequence and optical map data.</title>
        <authorList>
            <person name="Kawahara Y."/>
            <person name="de la Bastide M."/>
            <person name="Hamilton J.P."/>
            <person name="Kanamori H."/>
            <person name="McCombie W.R."/>
            <person name="Ouyang S."/>
            <person name="Schwartz D.C."/>
            <person name="Tanaka T."/>
            <person name="Wu J."/>
            <person name="Zhou S."/>
            <person name="Childs K.L."/>
            <person name="Davidson R.M."/>
            <person name="Lin H."/>
            <person name="Quesada-Ocampo L."/>
            <person name="Vaillancourt B."/>
            <person name="Sakai H."/>
            <person name="Lee S.S."/>
            <person name="Kim J."/>
            <person name="Numa H."/>
            <person name="Itoh T."/>
            <person name="Buell C.R."/>
            <person name="Matsumoto T."/>
        </authorList>
    </citation>
    <scope>GENOME REANNOTATION</scope>
    <source>
        <strain>cv. Nipponbare</strain>
    </source>
</reference>
<reference key="4">
    <citation type="journal article" date="2005" name="PLoS Biol.">
        <title>The genomes of Oryza sativa: a history of duplications.</title>
        <authorList>
            <person name="Yu J."/>
            <person name="Wang J."/>
            <person name="Lin W."/>
            <person name="Li S."/>
            <person name="Li H."/>
            <person name="Zhou J."/>
            <person name="Ni P."/>
            <person name="Dong W."/>
            <person name="Hu S."/>
            <person name="Zeng C."/>
            <person name="Zhang J."/>
            <person name="Zhang Y."/>
            <person name="Li R."/>
            <person name="Xu Z."/>
            <person name="Li S."/>
            <person name="Li X."/>
            <person name="Zheng H."/>
            <person name="Cong L."/>
            <person name="Lin L."/>
            <person name="Yin J."/>
            <person name="Geng J."/>
            <person name="Li G."/>
            <person name="Shi J."/>
            <person name="Liu J."/>
            <person name="Lv H."/>
            <person name="Li J."/>
            <person name="Wang J."/>
            <person name="Deng Y."/>
            <person name="Ran L."/>
            <person name="Shi X."/>
            <person name="Wang X."/>
            <person name="Wu Q."/>
            <person name="Li C."/>
            <person name="Ren X."/>
            <person name="Wang J."/>
            <person name="Wang X."/>
            <person name="Li D."/>
            <person name="Liu D."/>
            <person name="Zhang X."/>
            <person name="Ji Z."/>
            <person name="Zhao W."/>
            <person name="Sun Y."/>
            <person name="Zhang Z."/>
            <person name="Bao J."/>
            <person name="Han Y."/>
            <person name="Dong L."/>
            <person name="Ji J."/>
            <person name="Chen P."/>
            <person name="Wu S."/>
            <person name="Liu J."/>
            <person name="Xiao Y."/>
            <person name="Bu D."/>
            <person name="Tan J."/>
            <person name="Yang L."/>
            <person name="Ye C."/>
            <person name="Zhang J."/>
            <person name="Xu J."/>
            <person name="Zhou Y."/>
            <person name="Yu Y."/>
            <person name="Zhang B."/>
            <person name="Zhuang S."/>
            <person name="Wei H."/>
            <person name="Liu B."/>
            <person name="Lei M."/>
            <person name="Yu H."/>
            <person name="Li Y."/>
            <person name="Xu H."/>
            <person name="Wei S."/>
            <person name="He X."/>
            <person name="Fang L."/>
            <person name="Zhang Z."/>
            <person name="Zhang Y."/>
            <person name="Huang X."/>
            <person name="Su Z."/>
            <person name="Tong W."/>
            <person name="Li J."/>
            <person name="Tong Z."/>
            <person name="Li S."/>
            <person name="Ye J."/>
            <person name="Wang L."/>
            <person name="Fang L."/>
            <person name="Lei T."/>
            <person name="Chen C.-S."/>
            <person name="Chen H.-C."/>
            <person name="Xu Z."/>
            <person name="Li H."/>
            <person name="Huang H."/>
            <person name="Zhang F."/>
            <person name="Xu H."/>
            <person name="Li N."/>
            <person name="Zhao C."/>
            <person name="Li S."/>
            <person name="Dong L."/>
            <person name="Huang Y."/>
            <person name="Li L."/>
            <person name="Xi Y."/>
            <person name="Qi Q."/>
            <person name="Li W."/>
            <person name="Zhang B."/>
            <person name="Hu W."/>
            <person name="Zhang Y."/>
            <person name="Tian X."/>
            <person name="Jiao Y."/>
            <person name="Liang X."/>
            <person name="Jin J."/>
            <person name="Gao L."/>
            <person name="Zheng W."/>
            <person name="Hao B."/>
            <person name="Liu S.-M."/>
            <person name="Wang W."/>
            <person name="Yuan L."/>
            <person name="Cao M."/>
            <person name="McDermott J."/>
            <person name="Samudrala R."/>
            <person name="Wang J."/>
            <person name="Wong G.K.-S."/>
            <person name="Yang H."/>
        </authorList>
    </citation>
    <scope>NUCLEOTIDE SEQUENCE [LARGE SCALE GENOMIC DNA]</scope>
    <source>
        <strain>cv. Nipponbare</strain>
    </source>
</reference>
<reference key="5">
    <citation type="journal article" date="2003" name="Science">
        <title>Collection, mapping, and annotation of over 28,000 cDNA clones from japonica rice.</title>
        <authorList>
            <consortium name="The rice full-length cDNA consortium"/>
        </authorList>
    </citation>
    <scope>NUCLEOTIDE SEQUENCE [LARGE SCALE MRNA]</scope>
    <source>
        <strain>cv. Nipponbare</strain>
    </source>
</reference>
<accession>Q8H5F8</accession>
<accession>A0A0P0XAT7</accession>
<keyword id="KW-0378">Hydrolase</keyword>
<keyword id="KW-0479">Metal-binding</keyword>
<keyword id="KW-1185">Reference proteome</keyword>
<keyword id="KW-0862">Zinc</keyword>
<protein>
    <recommendedName>
        <fullName>Manganese-dependent ADP-ribose/CDP-alcohol diphosphatase</fullName>
        <ecNumber>3.6.1.13</ecNumber>
        <ecNumber>3.6.1.16</ecNumber>
        <ecNumber>3.6.1.53</ecNumber>
    </recommendedName>
    <alternativeName>
        <fullName>ADPRibase-Mn</fullName>
    </alternativeName>
    <alternativeName>
        <fullName>CDP-choline phosphohydrolase</fullName>
    </alternativeName>
</protein>
<dbReference type="EC" id="3.6.1.13"/>
<dbReference type="EC" id="3.6.1.16"/>
<dbReference type="EC" id="3.6.1.53"/>
<dbReference type="EMBL" id="AP003813">
    <property type="protein sequence ID" value="BAD30300.1"/>
    <property type="molecule type" value="Genomic_DNA"/>
</dbReference>
<dbReference type="EMBL" id="AP003816">
    <property type="protein sequence ID" value="BAC21348.1"/>
    <property type="molecule type" value="Genomic_DNA"/>
</dbReference>
<dbReference type="EMBL" id="AP008213">
    <property type="protein sequence ID" value="BAF22612.1"/>
    <property type="molecule type" value="Genomic_DNA"/>
</dbReference>
<dbReference type="EMBL" id="AP014963">
    <property type="protein sequence ID" value="BAT03310.1"/>
    <property type="molecule type" value="Genomic_DNA"/>
</dbReference>
<dbReference type="EMBL" id="CM000144">
    <property type="protein sequence ID" value="EEE67850.1"/>
    <property type="molecule type" value="Genomic_DNA"/>
</dbReference>
<dbReference type="EMBL" id="AK069836">
    <property type="protein sequence ID" value="BAG91628.1"/>
    <property type="molecule type" value="mRNA"/>
</dbReference>
<dbReference type="EMBL" id="AK106965">
    <property type="protein sequence ID" value="BAG97898.1"/>
    <property type="molecule type" value="mRNA"/>
</dbReference>
<dbReference type="RefSeq" id="XP_015647583.1">
    <property type="nucleotide sequence ID" value="XM_015792097.1"/>
</dbReference>
<dbReference type="SMR" id="Q8H5F8"/>
<dbReference type="FunCoup" id="Q8H5F8">
    <property type="interactions" value="490"/>
</dbReference>
<dbReference type="STRING" id="39947.Q8H5F8"/>
<dbReference type="PaxDb" id="39947-Q8H5F8"/>
<dbReference type="EnsemblPlants" id="Os07t0688000-01">
    <property type="protein sequence ID" value="Os07t0688000-01"/>
    <property type="gene ID" value="Os07g0688000"/>
</dbReference>
<dbReference type="EnsemblPlants" id="Os07t0688000-02">
    <property type="protein sequence ID" value="Os07t0688000-02"/>
    <property type="gene ID" value="Os07g0688000"/>
</dbReference>
<dbReference type="Gramene" id="Os07t0688000-01">
    <property type="protein sequence ID" value="Os07t0688000-01"/>
    <property type="gene ID" value="Os07g0688000"/>
</dbReference>
<dbReference type="Gramene" id="Os07t0688000-02">
    <property type="protein sequence ID" value="Os07t0688000-02"/>
    <property type="gene ID" value="Os07g0688000"/>
</dbReference>
<dbReference type="KEGG" id="dosa:Os07g0688000"/>
<dbReference type="eggNOG" id="ENOG502QUQW">
    <property type="taxonomic scope" value="Eukaryota"/>
</dbReference>
<dbReference type="HOGENOM" id="CLU_039893_1_0_1"/>
<dbReference type="InParanoid" id="Q8H5F8"/>
<dbReference type="OMA" id="GHNHAGN"/>
<dbReference type="OrthoDB" id="9675250at2759"/>
<dbReference type="Proteomes" id="UP000000763">
    <property type="component" value="Chromosome 7"/>
</dbReference>
<dbReference type="Proteomes" id="UP000007752">
    <property type="component" value="Chromosome 7"/>
</dbReference>
<dbReference type="Proteomes" id="UP000059680">
    <property type="component" value="Chromosome 7"/>
</dbReference>
<dbReference type="GO" id="GO:0008663">
    <property type="term" value="F:2',3'-cyclic-nucleotide 2'-phosphodiesterase activity"/>
    <property type="evidence" value="ECO:0000318"/>
    <property type="project" value="GO_Central"/>
</dbReference>
<dbReference type="GO" id="GO:0047631">
    <property type="term" value="F:ADP-ribose diphosphatase activity"/>
    <property type="evidence" value="ECO:0000318"/>
    <property type="project" value="GO_Central"/>
</dbReference>
<dbReference type="GO" id="GO:0047734">
    <property type="term" value="F:CDP-glycerol diphosphatase activity"/>
    <property type="evidence" value="ECO:0000318"/>
    <property type="project" value="GO_Central"/>
</dbReference>
<dbReference type="GO" id="GO:0030145">
    <property type="term" value="F:manganese ion binding"/>
    <property type="evidence" value="ECO:0000318"/>
    <property type="project" value="GO_Central"/>
</dbReference>
<dbReference type="CDD" id="cd07396">
    <property type="entry name" value="MPP_Nbla03831"/>
    <property type="match status" value="1"/>
</dbReference>
<dbReference type="Gene3D" id="3.60.21.10">
    <property type="match status" value="1"/>
</dbReference>
<dbReference type="InterPro" id="IPR004843">
    <property type="entry name" value="Calcineurin-like_PHP_ApaH"/>
</dbReference>
<dbReference type="InterPro" id="IPR029052">
    <property type="entry name" value="Metallo-depent_PP-like"/>
</dbReference>
<dbReference type="InterPro" id="IPR041869">
    <property type="entry name" value="MPP_ADPRM"/>
</dbReference>
<dbReference type="PANTHER" id="PTHR16509">
    <property type="match status" value="1"/>
</dbReference>
<dbReference type="PANTHER" id="PTHR16509:SF6">
    <property type="entry name" value="MANGANESE-DEPENDENT ADP-RIBOSE_CDP-ALCOHOL DIPHOSPHATASE"/>
    <property type="match status" value="1"/>
</dbReference>
<dbReference type="Pfam" id="PF00149">
    <property type="entry name" value="Metallophos"/>
    <property type="match status" value="1"/>
</dbReference>
<dbReference type="SUPFAM" id="SSF56300">
    <property type="entry name" value="Metallo-dependent phosphatases"/>
    <property type="match status" value="1"/>
</dbReference>
<gene>
    <name type="ordered locus">Os07g0688000</name>
    <name type="ordered locus">LOC_Os07g48840</name>
    <name type="ORF">OJ1150_E04.129</name>
    <name type="ORF">OJ1165_F02.106</name>
    <name type="ORF">OsJ_25650</name>
</gene>
<name>ADPRM_ORYSJ</name>
<sequence>MMAVTNGVIHASSREPLFSFGVIADVQYADIPDGRSFLGVPRYYRHSISVLQRAVSTWNKQHNIKFSINFGDIIDGYCPKDKSLWAVQKVLDEFEKFDGPTYHMFGNHCLYNLPRGKLVSLLKMPTDSDRAYYDFSPCPEYRFVVLDAYDFSALGWPRDHPVTAEAMKFLEEKNPNSDKNSPDGLVGVDRRFVMFNGGVGKEQLSWLNDVLQDASARRQNVILCSHLPMDPGSASFAALMWNYDEVMAIVRQYKCVKACFAGHDHKGGHSVDSHGVHHRTLEAALECPPGTSAFGHIEVYPDKLLLVGSDKMADTEMCFEP</sequence>